<protein>
    <recommendedName>
        <fullName>Uncharacterized protein RP063</fullName>
    </recommendedName>
</protein>
<proteinExistence type="inferred from homology"/>
<comment type="similarity">
    <text evidence="1">Belongs to the HesB/IscA family.</text>
</comment>
<organism>
    <name type="scientific">Rickettsia prowazekii (strain Madrid E)</name>
    <dbReference type="NCBI Taxonomy" id="272947"/>
    <lineage>
        <taxon>Bacteria</taxon>
        <taxon>Pseudomonadati</taxon>
        <taxon>Pseudomonadota</taxon>
        <taxon>Alphaproteobacteria</taxon>
        <taxon>Rickettsiales</taxon>
        <taxon>Rickettsiaceae</taxon>
        <taxon>Rickettsieae</taxon>
        <taxon>Rickettsia</taxon>
        <taxon>typhus group</taxon>
    </lineage>
</organism>
<keyword id="KW-1185">Reference proteome</keyword>
<feature type="chain" id="PRO_0000077020" description="Uncharacterized protein RP063">
    <location>
        <begin position="1"/>
        <end position="110"/>
    </location>
</feature>
<reference key="1">
    <citation type="journal article" date="1998" name="Nature">
        <title>The genome sequence of Rickettsia prowazekii and the origin of mitochondria.</title>
        <authorList>
            <person name="Andersson S.G.E."/>
            <person name="Zomorodipour A."/>
            <person name="Andersson J.O."/>
            <person name="Sicheritz-Ponten T."/>
            <person name="Alsmark U.C.M."/>
            <person name="Podowski R.M."/>
            <person name="Naeslund A.K."/>
            <person name="Eriksson A.-S."/>
            <person name="Winkler H.H."/>
            <person name="Kurland C.G."/>
        </authorList>
    </citation>
    <scope>NUCLEOTIDE SEQUENCE [LARGE SCALE GENOMIC DNA]</scope>
    <source>
        <strain>Madrid E</strain>
    </source>
</reference>
<accession>Q9ZE83</accession>
<dbReference type="EMBL" id="AJ235270">
    <property type="protein sequence ID" value="CAA14534.1"/>
    <property type="molecule type" value="Genomic_DNA"/>
</dbReference>
<dbReference type="PIR" id="G71714">
    <property type="entry name" value="G71714"/>
</dbReference>
<dbReference type="RefSeq" id="NP_220457.1">
    <property type="nucleotide sequence ID" value="NC_000963.1"/>
</dbReference>
<dbReference type="RefSeq" id="WP_004596580.1">
    <property type="nucleotide sequence ID" value="NC_000963.1"/>
</dbReference>
<dbReference type="SMR" id="Q9ZE83"/>
<dbReference type="STRING" id="272947.gene:17555146"/>
<dbReference type="EnsemblBacteria" id="CAA14534">
    <property type="protein sequence ID" value="CAA14534"/>
    <property type="gene ID" value="CAA14534"/>
</dbReference>
<dbReference type="KEGG" id="rpr:RP063"/>
<dbReference type="PATRIC" id="fig|272947.5.peg.64"/>
<dbReference type="eggNOG" id="COG0316">
    <property type="taxonomic scope" value="Bacteria"/>
</dbReference>
<dbReference type="HOGENOM" id="CLU_069054_5_3_5"/>
<dbReference type="OrthoDB" id="9801228at2"/>
<dbReference type="Proteomes" id="UP000002480">
    <property type="component" value="Chromosome"/>
</dbReference>
<dbReference type="GO" id="GO:0051537">
    <property type="term" value="F:2 iron, 2 sulfur cluster binding"/>
    <property type="evidence" value="ECO:0007669"/>
    <property type="project" value="TreeGrafter"/>
</dbReference>
<dbReference type="GO" id="GO:0051539">
    <property type="term" value="F:4 iron, 4 sulfur cluster binding"/>
    <property type="evidence" value="ECO:0007669"/>
    <property type="project" value="TreeGrafter"/>
</dbReference>
<dbReference type="GO" id="GO:0005506">
    <property type="term" value="F:iron ion binding"/>
    <property type="evidence" value="ECO:0007669"/>
    <property type="project" value="TreeGrafter"/>
</dbReference>
<dbReference type="GO" id="GO:0016226">
    <property type="term" value="P:iron-sulfur cluster assembly"/>
    <property type="evidence" value="ECO:0007669"/>
    <property type="project" value="InterPro"/>
</dbReference>
<dbReference type="Gene3D" id="2.60.300.12">
    <property type="entry name" value="HesB-like domain"/>
    <property type="match status" value="1"/>
</dbReference>
<dbReference type="InterPro" id="IPR000361">
    <property type="entry name" value="FeS_biogenesis"/>
</dbReference>
<dbReference type="InterPro" id="IPR016092">
    <property type="entry name" value="FeS_cluster_insertion"/>
</dbReference>
<dbReference type="InterPro" id="IPR017870">
    <property type="entry name" value="FeS_cluster_insertion_CS"/>
</dbReference>
<dbReference type="InterPro" id="IPR035903">
    <property type="entry name" value="HesB-like_dom_sf"/>
</dbReference>
<dbReference type="NCBIfam" id="TIGR00049">
    <property type="entry name" value="iron-sulfur cluster assembly accessory protein"/>
    <property type="match status" value="1"/>
</dbReference>
<dbReference type="PANTHER" id="PTHR43011">
    <property type="entry name" value="IRON-SULFUR CLUSTER ASSEMBLY 2 HOMOLOG, MITOCHONDRIAL"/>
    <property type="match status" value="1"/>
</dbReference>
<dbReference type="PANTHER" id="PTHR43011:SF1">
    <property type="entry name" value="IRON-SULFUR CLUSTER ASSEMBLY 2 HOMOLOG, MITOCHONDRIAL"/>
    <property type="match status" value="1"/>
</dbReference>
<dbReference type="Pfam" id="PF01521">
    <property type="entry name" value="Fe-S_biosyn"/>
    <property type="match status" value="1"/>
</dbReference>
<dbReference type="SUPFAM" id="SSF89360">
    <property type="entry name" value="HesB-like domain"/>
    <property type="match status" value="1"/>
</dbReference>
<dbReference type="PROSITE" id="PS01152">
    <property type="entry name" value="HESB"/>
    <property type="match status" value="1"/>
</dbReference>
<gene>
    <name type="ordered locus">RP063</name>
</gene>
<sequence>MTITITDRAFERIYELIELEKDKNLVLRVSVDSGGCSGLMYNYELVSKDNIEKDDYVFTRHNATIIIDSISQKFMLNCTLDFIEELGSSYFNVSNPQAKAKCGCGNSFSV</sequence>
<name>Y063_RICPR</name>
<evidence type="ECO:0000305" key="1"/>